<keyword id="KW-0022">Alpha-amylase inhibitor</keyword>
<keyword id="KW-0903">Direct protein sequencing</keyword>
<keyword id="KW-1015">Disulfide bond</keyword>
<keyword id="KW-0646">Protease inhibitor</keyword>
<keyword id="KW-0964">Secreted</keyword>
<keyword id="KW-0722">Serine protease inhibitor</keyword>
<keyword id="KW-0732">Signal</keyword>
<proteinExistence type="evidence at protein level"/>
<accession>P11643</accession>
<gene>
    <name type="primary">IAT3</name>
    <name type="synonym">CMD2</name>
</gene>
<name>IAAD_HORVU</name>
<organism>
    <name type="scientific">Hordeum vulgare</name>
    <name type="common">Barley</name>
    <dbReference type="NCBI Taxonomy" id="4513"/>
    <lineage>
        <taxon>Eukaryota</taxon>
        <taxon>Viridiplantae</taxon>
        <taxon>Streptophyta</taxon>
        <taxon>Embryophyta</taxon>
        <taxon>Tracheophyta</taxon>
        <taxon>Spermatophyta</taxon>
        <taxon>Magnoliopsida</taxon>
        <taxon>Liliopsida</taxon>
        <taxon>Poales</taxon>
        <taxon>Poaceae</taxon>
        <taxon>BOP clade</taxon>
        <taxon>Pooideae</taxon>
        <taxon>Triticodae</taxon>
        <taxon>Triticeae</taxon>
        <taxon>Hordeinae</taxon>
        <taxon>Hordeum</taxon>
    </lineage>
</organism>
<evidence type="ECO:0000269" key="1">
    <source>
    </source>
</evidence>
<evidence type="ECO:0000305" key="2"/>
<reference key="1">
    <citation type="journal article" date="1993" name="Plant Mol. Biol.">
        <title>Cloning of cDNA, expression, and chromosomal location of genes encoding the three types of subunits of the barley tetrameric inhibitor of insect alpha-amylase.</title>
        <authorList>
            <person name="Medina-Alcazar J."/>
            <person name="Hueros G."/>
            <person name="Carbonero P."/>
        </authorList>
    </citation>
    <scope>NUCLEOTIDE SEQUENCE [MRNA]</scope>
    <source>
        <strain>cv. Abyssinian</strain>
        <tissue>Endosperm</tissue>
    </source>
</reference>
<reference key="2">
    <citation type="journal article" date="1997" name="Plant Mol. Biol.">
        <title>Characterization of a barley gene coding for an alpha-amylase inhibitor subunit (CMd protein) and analysis of its promoter in transgenic tobacco plants and in maize kernels by microprojectile bombardment.</title>
        <authorList>
            <person name="Grosset J."/>
            <person name="Alary R."/>
            <person name="Gautier M.-F."/>
            <person name="Menossi M."/>
            <person name="Martinez-Izquierdo J.A."/>
            <person name="Joudrier P."/>
        </authorList>
    </citation>
    <scope>NUCLEOTIDE SEQUENCE [GENOMIC DNA]</scope>
    <source>
        <strain>cv. NK 1558</strain>
    </source>
</reference>
<reference key="3">
    <citation type="journal article" date="1988" name="Biochim. Biophys. Acta">
        <title>Molecular cloning of the barley seed protein CMd: a variant member of the alpha-amylase/trypsin inhibitor family of cereals.</title>
        <authorList>
            <person name="Halford N.G."/>
            <person name="Morris N.A."/>
            <person name="Urwin P."/>
            <person name="Williamson M.S."/>
            <person name="Kasarda D.D."/>
            <person name="Lew E.J.-L."/>
            <person name="Kreis M."/>
            <person name="Shewry P.R."/>
        </authorList>
    </citation>
    <scope>NUCLEOTIDE SEQUENCE OF 11-171</scope>
    <source>
        <strain>cv. Hiproly</strain>
        <tissue>Endosperm</tissue>
    </source>
</reference>
<reference key="4">
    <citation type="journal article" date="1993" name="Electrophoresis">
        <title>Separation of acidic barley endosperm proteins by two-dimensional electrophoresis.</title>
        <authorList>
            <person name="Flengsrud R."/>
        </authorList>
    </citation>
    <scope>PROTEIN SEQUENCE OF 25-30</scope>
    <source>
        <strain>cv. H354-295-2-5</strain>
        <tissue>Starchy endosperm</tissue>
    </source>
</reference>
<feature type="signal peptide" evidence="1">
    <location>
        <begin position="1"/>
        <end position="24"/>
    </location>
</feature>
<feature type="chain" id="PRO_0000014352" description="Alpha-amylase/trypsin inhibitor CMd">
    <location>
        <begin position="25"/>
        <end position="171"/>
    </location>
</feature>
<comment type="function">
    <text>Part of a complex with inhibitory activity, but CMd is inactive as a separate subunit.</text>
</comment>
<comment type="subunit">
    <text>Heterotetramer of one CMa, one CMb and two CMd chains.</text>
</comment>
<comment type="subcellular location">
    <subcellularLocation>
        <location>Secreted</location>
    </subcellularLocation>
</comment>
<comment type="tissue specificity">
    <text>Endosperm.</text>
</comment>
<comment type="PTM">
    <text evidence="2">Five disulfide bonds, which are essential for the inhibitor activity, are probably present.</text>
</comment>
<comment type="similarity">
    <text evidence="2">Belongs to the protease inhibitor I6 (cereal trypsin/alpha-amylase inhibitor) family.</text>
</comment>
<sequence>MACKSSRSLLLLATVMVSVFAAAAAAAAATDCSPGVAFPTNLLGHCRDYVLQQTCAVFTPGSKLPEWMTSAELNYPGQPYLAKLYCCQELAEIPQQCRCEALRYFMALPVPSQPVDPSTGNVGQSGLMDLPGCPREMQRDFVRLLVAPGQCNLATIHNVRYCPAVEQPLWI</sequence>
<dbReference type="EMBL" id="X69939">
    <property type="protein sequence ID" value="CAA49557.1"/>
    <property type="molecule type" value="mRNA"/>
</dbReference>
<dbReference type="EMBL" id="U47641">
    <property type="protein sequence ID" value="AAB63441.1"/>
    <property type="molecule type" value="Genomic_DNA"/>
</dbReference>
<dbReference type="EMBL" id="X13198">
    <property type="protein sequence ID" value="CAA31585.1"/>
    <property type="molecule type" value="mRNA"/>
</dbReference>
<dbReference type="PIR" id="S78525">
    <property type="entry name" value="S78525"/>
</dbReference>
<dbReference type="SMR" id="P11643"/>
<dbReference type="MEROPS" id="I06.004"/>
<dbReference type="OMA" id="PAYCRCT"/>
<dbReference type="ExpressionAtlas" id="P11643">
    <property type="expression patterns" value="baseline and differential"/>
</dbReference>
<dbReference type="GO" id="GO:0005576">
    <property type="term" value="C:extracellular region"/>
    <property type="evidence" value="ECO:0007669"/>
    <property type="project" value="UniProtKB-SubCell"/>
</dbReference>
<dbReference type="GO" id="GO:0015066">
    <property type="term" value="F:alpha-amylase inhibitor activity"/>
    <property type="evidence" value="ECO:0007669"/>
    <property type="project" value="UniProtKB-KW"/>
</dbReference>
<dbReference type="GO" id="GO:0004867">
    <property type="term" value="F:serine-type endopeptidase inhibitor activity"/>
    <property type="evidence" value="ECO:0007669"/>
    <property type="project" value="UniProtKB-KW"/>
</dbReference>
<dbReference type="CDD" id="cd00261">
    <property type="entry name" value="AAI_SS"/>
    <property type="match status" value="1"/>
</dbReference>
<dbReference type="Gene3D" id="1.10.110.10">
    <property type="entry name" value="Plant lipid-transfer and hydrophobic proteins"/>
    <property type="match status" value="1"/>
</dbReference>
<dbReference type="InterPro" id="IPR006106">
    <property type="entry name" value="Allergen/soft/tryp_amyl_inhib"/>
</dbReference>
<dbReference type="InterPro" id="IPR006105">
    <property type="entry name" value="Allergen/tryp_amyl_inhib_CS"/>
</dbReference>
<dbReference type="InterPro" id="IPR036312">
    <property type="entry name" value="Bifun_inhib/LTP/seed_sf"/>
</dbReference>
<dbReference type="InterPro" id="IPR016140">
    <property type="entry name" value="Bifunc_inhib/LTP/seed_store"/>
</dbReference>
<dbReference type="PANTHER" id="PTHR34481:SF5">
    <property type="entry name" value="ALPHA-AMYLASE_TRYPSIN INHIBITOR CM3"/>
    <property type="match status" value="1"/>
</dbReference>
<dbReference type="PANTHER" id="PTHR34481">
    <property type="entry name" value="TRYPSIN/FACTOR XIIA INHIBITOR-RELATED"/>
    <property type="match status" value="1"/>
</dbReference>
<dbReference type="Pfam" id="PF00234">
    <property type="entry name" value="Tryp_alpha_amyl"/>
    <property type="match status" value="1"/>
</dbReference>
<dbReference type="PRINTS" id="PR00808">
    <property type="entry name" value="AMLASEINHBTR"/>
</dbReference>
<dbReference type="SMART" id="SM00499">
    <property type="entry name" value="AAI"/>
    <property type="match status" value="1"/>
</dbReference>
<dbReference type="SUPFAM" id="SSF47699">
    <property type="entry name" value="Bifunctional inhibitor/lipid-transfer protein/seed storage 2S albumin"/>
    <property type="match status" value="1"/>
</dbReference>
<dbReference type="PROSITE" id="PS00426">
    <property type="entry name" value="CEREAL_TRYP_AMYL_INH"/>
    <property type="match status" value="1"/>
</dbReference>
<protein>
    <recommendedName>
        <fullName>Alpha-amylase/trypsin inhibitor CMd</fullName>
    </recommendedName>
    <alternativeName>
        <fullName>Chloroform/methanol-soluble protein CMd</fullName>
    </alternativeName>
</protein>